<proteinExistence type="inferred from homology"/>
<organism>
    <name type="scientific">Erwinia tasmaniensis (strain DSM 17950 / CFBP 7177 / CIP 109463 / NCPPB 4357 / Et1/99)</name>
    <dbReference type="NCBI Taxonomy" id="465817"/>
    <lineage>
        <taxon>Bacteria</taxon>
        <taxon>Pseudomonadati</taxon>
        <taxon>Pseudomonadota</taxon>
        <taxon>Gammaproteobacteria</taxon>
        <taxon>Enterobacterales</taxon>
        <taxon>Erwiniaceae</taxon>
        <taxon>Erwinia</taxon>
    </lineage>
</organism>
<keyword id="KW-1185">Reference proteome</keyword>
<keyword id="KW-0687">Ribonucleoprotein</keyword>
<keyword id="KW-0689">Ribosomal protein</keyword>
<keyword id="KW-0694">RNA-binding</keyword>
<keyword id="KW-0699">rRNA-binding</keyword>
<keyword id="KW-0820">tRNA-binding</keyword>
<comment type="function">
    <text evidence="1">Located at the top of the head of the 30S subunit, it contacts several helices of the 16S rRNA. In the 70S ribosome it contacts the 23S rRNA (bridge B1a) and protein L5 of the 50S subunit (bridge B1b), connecting the 2 subunits; these bridges are implicated in subunit movement. Contacts the tRNAs in the A and P-sites.</text>
</comment>
<comment type="subunit">
    <text evidence="1">Part of the 30S ribosomal subunit. Forms a loose heterodimer with protein S19. Forms two bridges to the 50S subunit in the 70S ribosome.</text>
</comment>
<comment type="similarity">
    <text evidence="1">Belongs to the universal ribosomal protein uS13 family.</text>
</comment>
<feature type="chain" id="PRO_1000141261" description="Small ribosomal subunit protein uS13">
    <location>
        <begin position="1"/>
        <end position="118"/>
    </location>
</feature>
<feature type="region of interest" description="Disordered" evidence="2">
    <location>
        <begin position="94"/>
        <end position="118"/>
    </location>
</feature>
<name>RS13_ERWT9</name>
<sequence length="118" mass="13170">MARIAGINIPDHKHTVIALTAIFGIGKTRSQSICASTGIAENVKISELSEEQIDILRDAVAKFVVEGDLRREVTLSIKRLMDLGCYRGLRHRRGLPVRGQRTKTNARTRKGPRKPIKK</sequence>
<evidence type="ECO:0000255" key="1">
    <source>
        <dbReference type="HAMAP-Rule" id="MF_01315"/>
    </source>
</evidence>
<evidence type="ECO:0000256" key="2">
    <source>
        <dbReference type="SAM" id="MobiDB-lite"/>
    </source>
</evidence>
<evidence type="ECO:0000305" key="3"/>
<protein>
    <recommendedName>
        <fullName evidence="1">Small ribosomal subunit protein uS13</fullName>
    </recommendedName>
    <alternativeName>
        <fullName evidence="3">30S ribosomal protein S13</fullName>
    </alternativeName>
</protein>
<gene>
    <name evidence="1" type="primary">rpsM</name>
    <name type="ordered locus">ETA_31410</name>
</gene>
<reference key="1">
    <citation type="journal article" date="2008" name="Environ. Microbiol.">
        <title>The genome of Erwinia tasmaniensis strain Et1/99, a non-pathogenic bacterium in the genus Erwinia.</title>
        <authorList>
            <person name="Kube M."/>
            <person name="Migdoll A.M."/>
            <person name="Mueller I."/>
            <person name="Kuhl H."/>
            <person name="Beck A."/>
            <person name="Reinhardt R."/>
            <person name="Geider K."/>
        </authorList>
    </citation>
    <scope>NUCLEOTIDE SEQUENCE [LARGE SCALE GENOMIC DNA]</scope>
    <source>
        <strain>DSM 17950 / CFBP 7177 / CIP 109463 / NCPPB 4357 / Et1/99</strain>
    </source>
</reference>
<accession>B2VK74</accession>
<dbReference type="EMBL" id="CU468135">
    <property type="protein sequence ID" value="CAO98187.1"/>
    <property type="molecule type" value="Genomic_DNA"/>
</dbReference>
<dbReference type="RefSeq" id="WP_012442833.1">
    <property type="nucleotide sequence ID" value="NC_010694.1"/>
</dbReference>
<dbReference type="SMR" id="B2VK74"/>
<dbReference type="STRING" id="465817.ETA_31410"/>
<dbReference type="GeneID" id="92235530"/>
<dbReference type="KEGG" id="eta:ETA_31410"/>
<dbReference type="eggNOG" id="COG0099">
    <property type="taxonomic scope" value="Bacteria"/>
</dbReference>
<dbReference type="HOGENOM" id="CLU_103849_1_2_6"/>
<dbReference type="OrthoDB" id="9803610at2"/>
<dbReference type="Proteomes" id="UP000001726">
    <property type="component" value="Chromosome"/>
</dbReference>
<dbReference type="GO" id="GO:0005829">
    <property type="term" value="C:cytosol"/>
    <property type="evidence" value="ECO:0007669"/>
    <property type="project" value="TreeGrafter"/>
</dbReference>
<dbReference type="GO" id="GO:0015935">
    <property type="term" value="C:small ribosomal subunit"/>
    <property type="evidence" value="ECO:0007669"/>
    <property type="project" value="TreeGrafter"/>
</dbReference>
<dbReference type="GO" id="GO:0019843">
    <property type="term" value="F:rRNA binding"/>
    <property type="evidence" value="ECO:0007669"/>
    <property type="project" value="UniProtKB-UniRule"/>
</dbReference>
<dbReference type="GO" id="GO:0003735">
    <property type="term" value="F:structural constituent of ribosome"/>
    <property type="evidence" value="ECO:0007669"/>
    <property type="project" value="InterPro"/>
</dbReference>
<dbReference type="GO" id="GO:0000049">
    <property type="term" value="F:tRNA binding"/>
    <property type="evidence" value="ECO:0007669"/>
    <property type="project" value="UniProtKB-UniRule"/>
</dbReference>
<dbReference type="GO" id="GO:0006412">
    <property type="term" value="P:translation"/>
    <property type="evidence" value="ECO:0007669"/>
    <property type="project" value="UniProtKB-UniRule"/>
</dbReference>
<dbReference type="FunFam" id="1.10.8.50:FF:000001">
    <property type="entry name" value="30S ribosomal protein S13"/>
    <property type="match status" value="1"/>
</dbReference>
<dbReference type="FunFam" id="4.10.910.10:FF:000001">
    <property type="entry name" value="30S ribosomal protein S13"/>
    <property type="match status" value="1"/>
</dbReference>
<dbReference type="Gene3D" id="1.10.8.50">
    <property type="match status" value="1"/>
</dbReference>
<dbReference type="Gene3D" id="4.10.910.10">
    <property type="entry name" value="30s ribosomal protein s13, domain 2"/>
    <property type="match status" value="1"/>
</dbReference>
<dbReference type="HAMAP" id="MF_01315">
    <property type="entry name" value="Ribosomal_uS13"/>
    <property type="match status" value="1"/>
</dbReference>
<dbReference type="InterPro" id="IPR027437">
    <property type="entry name" value="Rbsml_uS13_C"/>
</dbReference>
<dbReference type="InterPro" id="IPR001892">
    <property type="entry name" value="Ribosomal_uS13"/>
</dbReference>
<dbReference type="InterPro" id="IPR010979">
    <property type="entry name" value="Ribosomal_uS13-like_H2TH"/>
</dbReference>
<dbReference type="InterPro" id="IPR019980">
    <property type="entry name" value="Ribosomal_uS13_bac-type"/>
</dbReference>
<dbReference type="InterPro" id="IPR018269">
    <property type="entry name" value="Ribosomal_uS13_CS"/>
</dbReference>
<dbReference type="NCBIfam" id="TIGR03631">
    <property type="entry name" value="uS13_bact"/>
    <property type="match status" value="1"/>
</dbReference>
<dbReference type="PANTHER" id="PTHR10871">
    <property type="entry name" value="30S RIBOSOMAL PROTEIN S13/40S RIBOSOMAL PROTEIN S18"/>
    <property type="match status" value="1"/>
</dbReference>
<dbReference type="PANTHER" id="PTHR10871:SF1">
    <property type="entry name" value="SMALL RIBOSOMAL SUBUNIT PROTEIN US13M"/>
    <property type="match status" value="1"/>
</dbReference>
<dbReference type="Pfam" id="PF00416">
    <property type="entry name" value="Ribosomal_S13"/>
    <property type="match status" value="1"/>
</dbReference>
<dbReference type="PIRSF" id="PIRSF002134">
    <property type="entry name" value="Ribosomal_S13"/>
    <property type="match status" value="1"/>
</dbReference>
<dbReference type="SUPFAM" id="SSF46946">
    <property type="entry name" value="S13-like H2TH domain"/>
    <property type="match status" value="1"/>
</dbReference>
<dbReference type="PROSITE" id="PS00646">
    <property type="entry name" value="RIBOSOMAL_S13_1"/>
    <property type="match status" value="1"/>
</dbReference>
<dbReference type="PROSITE" id="PS50159">
    <property type="entry name" value="RIBOSOMAL_S13_2"/>
    <property type="match status" value="1"/>
</dbReference>